<protein>
    <recommendedName>
        <fullName evidence="1">Elongation factor 4</fullName>
        <shortName evidence="1">EF-4</shortName>
        <ecNumber evidence="1">3.6.5.n1</ecNumber>
    </recommendedName>
    <alternativeName>
        <fullName evidence="1">Ribosomal back-translocase LepA</fullName>
    </alternativeName>
</protein>
<reference key="1">
    <citation type="journal article" date="2009" name="Appl. Environ. Microbiol.">
        <title>Genome analysis of the meat starter culture bacterium Staphylococcus carnosus TM300.</title>
        <authorList>
            <person name="Rosenstein R."/>
            <person name="Nerz C."/>
            <person name="Biswas L."/>
            <person name="Resch A."/>
            <person name="Raddatz G."/>
            <person name="Schuster S.C."/>
            <person name="Goetz F."/>
        </authorList>
    </citation>
    <scope>NUCLEOTIDE SEQUENCE [LARGE SCALE GENOMIC DNA]</scope>
    <source>
        <strain>TM300</strain>
    </source>
</reference>
<name>LEPA_STACT</name>
<sequence length="607" mass="67999">MNNEERLERQKNIRNFSIIAHIDHGKSTLADRILENTKSVETRDMQAQLLDSMDLERERGITIKLNAVKLKYEAKNGESYIFHLIDTPGHVDFSYEVSRSLAACEGAILVVDAAQGIEAQTLANVYLALDNDLELLPVVNKIDLPAAEPERVKQELEDVIGIDQDDVVLASAKSNIGIDEILEKIVETIPAPSGDPSAPLKALIFDSEYDPYRGVISSIRIVDGVVKAGDKIKMMASGKEFEVTEVGINTPKQLPVDELTVGDVGYITASIKNVDDSRVGDTITHADQPAEQPLKGYKKMNPMVYCGLFPIDNKKYNDLREALEKLQLNDASLEFEPETSQALGFGFRTGFLGMLHMEIIQERIEREFGIELIATAPSVIYECILKNGDKVIVDNPSKMPERDQIEEIYEPYVRATIMVPNDYVGAVMELCQRKRGQFINMDYLDDIRVNIIYDIPLSEVVFDFFDQIKSNTKGYASFDYELTGYKESNLVKMDILLNGDKVDALSFIVHKEFAYERGKALVERLKTLIPRQQFEVPVQAAVGQKIVARTNIKSMGKNVLSKCYGGDISRKRKLLEKQKAGKAKMKAVGNVEIPQDAFLAVLKMDED</sequence>
<keyword id="KW-1003">Cell membrane</keyword>
<keyword id="KW-0342">GTP-binding</keyword>
<keyword id="KW-0378">Hydrolase</keyword>
<keyword id="KW-0472">Membrane</keyword>
<keyword id="KW-0547">Nucleotide-binding</keyword>
<keyword id="KW-0648">Protein biosynthesis</keyword>
<keyword id="KW-1185">Reference proteome</keyword>
<accession>B9DNK4</accession>
<feature type="chain" id="PRO_1000190828" description="Elongation factor 4">
    <location>
        <begin position="1"/>
        <end position="607"/>
    </location>
</feature>
<feature type="domain" description="tr-type G">
    <location>
        <begin position="11"/>
        <end position="193"/>
    </location>
</feature>
<feature type="binding site" evidence="1">
    <location>
        <begin position="23"/>
        <end position="28"/>
    </location>
    <ligand>
        <name>GTP</name>
        <dbReference type="ChEBI" id="CHEBI:37565"/>
    </ligand>
</feature>
<feature type="binding site" evidence="1">
    <location>
        <begin position="140"/>
        <end position="143"/>
    </location>
    <ligand>
        <name>GTP</name>
        <dbReference type="ChEBI" id="CHEBI:37565"/>
    </ligand>
</feature>
<gene>
    <name evidence="1" type="primary">lepA</name>
    <name type="ordered locus">Sca_1206</name>
</gene>
<evidence type="ECO:0000255" key="1">
    <source>
        <dbReference type="HAMAP-Rule" id="MF_00071"/>
    </source>
</evidence>
<dbReference type="EC" id="3.6.5.n1" evidence="1"/>
<dbReference type="EMBL" id="AM295250">
    <property type="protein sequence ID" value="CAL28113.1"/>
    <property type="molecule type" value="Genomic_DNA"/>
</dbReference>
<dbReference type="RefSeq" id="WP_015900453.1">
    <property type="nucleotide sequence ID" value="NC_012121.1"/>
</dbReference>
<dbReference type="SMR" id="B9DNK4"/>
<dbReference type="GeneID" id="93793631"/>
<dbReference type="KEGG" id="sca:SCA_1206"/>
<dbReference type="eggNOG" id="COG0481">
    <property type="taxonomic scope" value="Bacteria"/>
</dbReference>
<dbReference type="HOGENOM" id="CLU_009995_3_3_9"/>
<dbReference type="OrthoDB" id="9804431at2"/>
<dbReference type="BioCyc" id="SCAR396513:SCA_RS06040-MONOMER"/>
<dbReference type="Proteomes" id="UP000000444">
    <property type="component" value="Chromosome"/>
</dbReference>
<dbReference type="GO" id="GO:0005886">
    <property type="term" value="C:plasma membrane"/>
    <property type="evidence" value="ECO:0007669"/>
    <property type="project" value="UniProtKB-SubCell"/>
</dbReference>
<dbReference type="GO" id="GO:0005525">
    <property type="term" value="F:GTP binding"/>
    <property type="evidence" value="ECO:0007669"/>
    <property type="project" value="UniProtKB-UniRule"/>
</dbReference>
<dbReference type="GO" id="GO:0003924">
    <property type="term" value="F:GTPase activity"/>
    <property type="evidence" value="ECO:0007669"/>
    <property type="project" value="UniProtKB-UniRule"/>
</dbReference>
<dbReference type="GO" id="GO:0043022">
    <property type="term" value="F:ribosome binding"/>
    <property type="evidence" value="ECO:0007669"/>
    <property type="project" value="UniProtKB-UniRule"/>
</dbReference>
<dbReference type="GO" id="GO:0003746">
    <property type="term" value="F:translation elongation factor activity"/>
    <property type="evidence" value="ECO:0007669"/>
    <property type="project" value="UniProtKB-UniRule"/>
</dbReference>
<dbReference type="GO" id="GO:0045727">
    <property type="term" value="P:positive regulation of translation"/>
    <property type="evidence" value="ECO:0007669"/>
    <property type="project" value="UniProtKB-UniRule"/>
</dbReference>
<dbReference type="CDD" id="cd03699">
    <property type="entry name" value="EF4_II"/>
    <property type="match status" value="1"/>
</dbReference>
<dbReference type="CDD" id="cd16260">
    <property type="entry name" value="EF4_III"/>
    <property type="match status" value="1"/>
</dbReference>
<dbReference type="CDD" id="cd01890">
    <property type="entry name" value="LepA"/>
    <property type="match status" value="1"/>
</dbReference>
<dbReference type="CDD" id="cd03709">
    <property type="entry name" value="lepA_C"/>
    <property type="match status" value="1"/>
</dbReference>
<dbReference type="FunFam" id="3.40.50.300:FF:000078">
    <property type="entry name" value="Elongation factor 4"/>
    <property type="match status" value="1"/>
</dbReference>
<dbReference type="FunFam" id="2.40.30.10:FF:000015">
    <property type="entry name" value="Translation factor GUF1, mitochondrial"/>
    <property type="match status" value="1"/>
</dbReference>
<dbReference type="FunFam" id="3.30.70.240:FF:000007">
    <property type="entry name" value="Translation factor GUF1, mitochondrial"/>
    <property type="match status" value="1"/>
</dbReference>
<dbReference type="FunFam" id="3.30.70.2570:FF:000001">
    <property type="entry name" value="Translation factor GUF1, mitochondrial"/>
    <property type="match status" value="1"/>
</dbReference>
<dbReference type="FunFam" id="3.30.70.870:FF:000004">
    <property type="entry name" value="Translation factor GUF1, mitochondrial"/>
    <property type="match status" value="1"/>
</dbReference>
<dbReference type="Gene3D" id="3.30.70.240">
    <property type="match status" value="1"/>
</dbReference>
<dbReference type="Gene3D" id="3.30.70.2570">
    <property type="entry name" value="Elongation factor 4, C-terminal domain"/>
    <property type="match status" value="1"/>
</dbReference>
<dbReference type="Gene3D" id="3.30.70.870">
    <property type="entry name" value="Elongation Factor G (Translational Gtpase), domain 3"/>
    <property type="match status" value="1"/>
</dbReference>
<dbReference type="Gene3D" id="3.40.50.300">
    <property type="entry name" value="P-loop containing nucleotide triphosphate hydrolases"/>
    <property type="match status" value="1"/>
</dbReference>
<dbReference type="Gene3D" id="2.40.30.10">
    <property type="entry name" value="Translation factors"/>
    <property type="match status" value="1"/>
</dbReference>
<dbReference type="HAMAP" id="MF_00071">
    <property type="entry name" value="LepA"/>
    <property type="match status" value="1"/>
</dbReference>
<dbReference type="InterPro" id="IPR006297">
    <property type="entry name" value="EF-4"/>
</dbReference>
<dbReference type="InterPro" id="IPR041095">
    <property type="entry name" value="EFG_II"/>
</dbReference>
<dbReference type="InterPro" id="IPR035647">
    <property type="entry name" value="EFG_III/V"/>
</dbReference>
<dbReference type="InterPro" id="IPR000640">
    <property type="entry name" value="EFG_V-like"/>
</dbReference>
<dbReference type="InterPro" id="IPR004161">
    <property type="entry name" value="EFTu-like_2"/>
</dbReference>
<dbReference type="InterPro" id="IPR031157">
    <property type="entry name" value="G_TR_CS"/>
</dbReference>
<dbReference type="InterPro" id="IPR038363">
    <property type="entry name" value="LepA_C_sf"/>
</dbReference>
<dbReference type="InterPro" id="IPR013842">
    <property type="entry name" value="LepA_CTD"/>
</dbReference>
<dbReference type="InterPro" id="IPR035654">
    <property type="entry name" value="LepA_IV"/>
</dbReference>
<dbReference type="InterPro" id="IPR027417">
    <property type="entry name" value="P-loop_NTPase"/>
</dbReference>
<dbReference type="InterPro" id="IPR005225">
    <property type="entry name" value="Small_GTP-bd"/>
</dbReference>
<dbReference type="InterPro" id="IPR000795">
    <property type="entry name" value="T_Tr_GTP-bd_dom"/>
</dbReference>
<dbReference type="InterPro" id="IPR009000">
    <property type="entry name" value="Transl_B-barrel_sf"/>
</dbReference>
<dbReference type="NCBIfam" id="TIGR01393">
    <property type="entry name" value="lepA"/>
    <property type="match status" value="1"/>
</dbReference>
<dbReference type="NCBIfam" id="TIGR00231">
    <property type="entry name" value="small_GTP"/>
    <property type="match status" value="1"/>
</dbReference>
<dbReference type="PANTHER" id="PTHR43512:SF4">
    <property type="entry name" value="TRANSLATION FACTOR GUF1 HOMOLOG, CHLOROPLASTIC"/>
    <property type="match status" value="1"/>
</dbReference>
<dbReference type="PANTHER" id="PTHR43512">
    <property type="entry name" value="TRANSLATION FACTOR GUF1-RELATED"/>
    <property type="match status" value="1"/>
</dbReference>
<dbReference type="Pfam" id="PF00679">
    <property type="entry name" value="EFG_C"/>
    <property type="match status" value="1"/>
</dbReference>
<dbReference type="Pfam" id="PF14492">
    <property type="entry name" value="EFG_III"/>
    <property type="match status" value="1"/>
</dbReference>
<dbReference type="Pfam" id="PF00009">
    <property type="entry name" value="GTP_EFTU"/>
    <property type="match status" value="1"/>
</dbReference>
<dbReference type="Pfam" id="PF03144">
    <property type="entry name" value="GTP_EFTU_D2"/>
    <property type="match status" value="1"/>
</dbReference>
<dbReference type="Pfam" id="PF06421">
    <property type="entry name" value="LepA_C"/>
    <property type="match status" value="1"/>
</dbReference>
<dbReference type="PRINTS" id="PR00315">
    <property type="entry name" value="ELONGATNFCT"/>
</dbReference>
<dbReference type="SMART" id="SM00838">
    <property type="entry name" value="EFG_C"/>
    <property type="match status" value="1"/>
</dbReference>
<dbReference type="SUPFAM" id="SSF54980">
    <property type="entry name" value="EF-G C-terminal domain-like"/>
    <property type="match status" value="2"/>
</dbReference>
<dbReference type="SUPFAM" id="SSF52540">
    <property type="entry name" value="P-loop containing nucleoside triphosphate hydrolases"/>
    <property type="match status" value="1"/>
</dbReference>
<dbReference type="SUPFAM" id="SSF50447">
    <property type="entry name" value="Translation proteins"/>
    <property type="match status" value="1"/>
</dbReference>
<dbReference type="PROSITE" id="PS00301">
    <property type="entry name" value="G_TR_1"/>
    <property type="match status" value="1"/>
</dbReference>
<dbReference type="PROSITE" id="PS51722">
    <property type="entry name" value="G_TR_2"/>
    <property type="match status" value="1"/>
</dbReference>
<organism>
    <name type="scientific">Staphylococcus carnosus (strain TM300)</name>
    <dbReference type="NCBI Taxonomy" id="396513"/>
    <lineage>
        <taxon>Bacteria</taxon>
        <taxon>Bacillati</taxon>
        <taxon>Bacillota</taxon>
        <taxon>Bacilli</taxon>
        <taxon>Bacillales</taxon>
        <taxon>Staphylococcaceae</taxon>
        <taxon>Staphylococcus</taxon>
    </lineage>
</organism>
<proteinExistence type="inferred from homology"/>
<comment type="function">
    <text evidence="1">Required for accurate and efficient protein synthesis under certain stress conditions. May act as a fidelity factor of the translation reaction, by catalyzing a one-codon backward translocation of tRNAs on improperly translocated ribosomes. Back-translocation proceeds from a post-translocation (POST) complex to a pre-translocation (PRE) complex, thus giving elongation factor G a second chance to translocate the tRNAs correctly. Binds to ribosomes in a GTP-dependent manner.</text>
</comment>
<comment type="catalytic activity">
    <reaction evidence="1">
        <text>GTP + H2O = GDP + phosphate + H(+)</text>
        <dbReference type="Rhea" id="RHEA:19669"/>
        <dbReference type="ChEBI" id="CHEBI:15377"/>
        <dbReference type="ChEBI" id="CHEBI:15378"/>
        <dbReference type="ChEBI" id="CHEBI:37565"/>
        <dbReference type="ChEBI" id="CHEBI:43474"/>
        <dbReference type="ChEBI" id="CHEBI:58189"/>
        <dbReference type="EC" id="3.6.5.n1"/>
    </reaction>
</comment>
<comment type="subcellular location">
    <subcellularLocation>
        <location evidence="1">Cell membrane</location>
        <topology evidence="1">Peripheral membrane protein</topology>
        <orientation evidence="1">Cytoplasmic side</orientation>
    </subcellularLocation>
</comment>
<comment type="similarity">
    <text evidence="1">Belongs to the TRAFAC class translation factor GTPase superfamily. Classic translation factor GTPase family. LepA subfamily.</text>
</comment>